<proteinExistence type="inferred from homology"/>
<keyword id="KW-1003">Cell membrane</keyword>
<keyword id="KW-0472">Membrane</keyword>
<keyword id="KW-0812">Transmembrane</keyword>
<keyword id="KW-1133">Transmembrane helix</keyword>
<keyword id="KW-0813">Transport</keyword>
<accession>A0A089FNE5</accession>
<gene>
    <name evidence="3" type="primary">prlL</name>
</gene>
<sequence length="495" mass="54249">MAQSFANEHDPAKRAEERGHVGTIEDVESGTKEPYIAEEPISAEAARALIWKQDKRIIPLSAAIYFLCYLDRSNIGNAKILNAATGNDLLTETHMTNYDYTIALMIFFLAYGLFEVPSNVLLKKLHPSRWIAILMFSWGAISMGLAGAHNYATVTVVRFLLGIFEAGLFPGLVYYLTFWYKTEERSIRVAFILASATLAGAFGGAIAYAVGHMNQAHGISAWRWLFIIEGAPSCVSALFVLFFLPDYPETVNWLSDEERELALRRLRVEGSKGLHQSDWWKDAKSTLVEWRLWAHYLIYFGISTPFSSLSLFTPSITAGLGYDGLQAQLMTVPPYAVAYVVQILVSWSADRTNSRGLHSAASATVGACGFLASAVLPAEAYLHRYGCLIVAAAGAFACIPPLLGWLSSNIFSTASVGLAIALNIGLGGAPGQIAGVWIYKADEAKKGYPTGHWVNAGLLFFVAVACVALRLHYGFRNRKTVRETGGIEGVRLFKY</sequence>
<dbReference type="EMBL" id="KM107910">
    <property type="protein sequence ID" value="AIP87508.1"/>
    <property type="molecule type" value="Genomic_DNA"/>
</dbReference>
<dbReference type="SMR" id="A0A089FNE5"/>
<dbReference type="GO" id="GO:0005886">
    <property type="term" value="C:plasma membrane"/>
    <property type="evidence" value="ECO:0007669"/>
    <property type="project" value="UniProtKB-SubCell"/>
</dbReference>
<dbReference type="GO" id="GO:0022857">
    <property type="term" value="F:transmembrane transporter activity"/>
    <property type="evidence" value="ECO:0007669"/>
    <property type="project" value="InterPro"/>
</dbReference>
<dbReference type="FunFam" id="1.20.1250.20:FF:000013">
    <property type="entry name" value="MFS general substrate transporter"/>
    <property type="match status" value="1"/>
</dbReference>
<dbReference type="FunFam" id="1.20.1250.20:FF:000722">
    <property type="entry name" value="MFS general substrate transporter"/>
    <property type="match status" value="1"/>
</dbReference>
<dbReference type="Gene3D" id="1.20.1250.20">
    <property type="entry name" value="MFS general substrate transporter like domains"/>
    <property type="match status" value="2"/>
</dbReference>
<dbReference type="InterPro" id="IPR011701">
    <property type="entry name" value="MFS"/>
</dbReference>
<dbReference type="InterPro" id="IPR020846">
    <property type="entry name" value="MFS_dom"/>
</dbReference>
<dbReference type="InterPro" id="IPR036259">
    <property type="entry name" value="MFS_trans_sf"/>
</dbReference>
<dbReference type="PANTHER" id="PTHR43791">
    <property type="entry name" value="PERMEASE-RELATED"/>
    <property type="match status" value="1"/>
</dbReference>
<dbReference type="PANTHER" id="PTHR43791:SF49">
    <property type="entry name" value="TRANSPORTER, PUTATIVE (AFU_ORTHOLOGUE AFUA_4G04250)-RELATED"/>
    <property type="match status" value="1"/>
</dbReference>
<dbReference type="Pfam" id="PF07690">
    <property type="entry name" value="MFS_1"/>
    <property type="match status" value="1"/>
</dbReference>
<dbReference type="SUPFAM" id="SSF103473">
    <property type="entry name" value="MFS general substrate transporter"/>
    <property type="match status" value="1"/>
</dbReference>
<dbReference type="PROSITE" id="PS50850">
    <property type="entry name" value="MFS"/>
    <property type="match status" value="1"/>
</dbReference>
<organism>
    <name type="scientific">Fungal sp. (strain NRRL 50135)</name>
    <dbReference type="NCBI Taxonomy" id="1547289"/>
    <lineage>
        <taxon>Eukaryota</taxon>
        <taxon>Fungi</taxon>
    </lineage>
</organism>
<protein>
    <recommendedName>
        <fullName evidence="3">MFS transporter prlL</fullName>
    </recommendedName>
    <alternativeName>
        <fullName evidence="3">Pyrrolocin biosynthesis protein L</fullName>
    </alternativeName>
</protein>
<reference key="1">
    <citation type="journal article" date="2015" name="ACS Synth. Biol.">
        <title>Native promoter strategy for high-yielding synthesis and engineering of fungal secondary metabolites.</title>
        <authorList>
            <person name="Kakule T.B."/>
            <person name="Jadulco R.C."/>
            <person name="Koch M."/>
            <person name="Janso J.E."/>
            <person name="Barrows L.R."/>
            <person name="Schmidt E.W."/>
        </authorList>
    </citation>
    <scope>NUCLEOTIDE SEQUENCE [GENOMIC DNA]</scope>
    <scope>FUNCTION</scope>
</reference>
<name>PRLL_FUNXX</name>
<comment type="function">
    <text evidence="5">Efflux pump that might be required for efficient secretion of pyrrolocin or other secondary metabolies produced by the pyrrolocin gene cluster (PubMed:25226362).</text>
</comment>
<comment type="subcellular location">
    <subcellularLocation>
        <location evidence="4">Cell membrane</location>
        <topology evidence="1">Multi-pass membrane protein</topology>
    </subcellularLocation>
</comment>
<comment type="similarity">
    <text evidence="4">Belongs to the major facilitator superfamily.</text>
</comment>
<feature type="chain" id="PRO_0000441313" description="MFS transporter prlL">
    <location>
        <begin position="1"/>
        <end position="495"/>
    </location>
</feature>
<feature type="transmembrane region" description="Helical" evidence="1">
    <location>
        <begin position="102"/>
        <end position="122"/>
    </location>
</feature>
<feature type="transmembrane region" description="Helical" evidence="1">
    <location>
        <begin position="130"/>
        <end position="150"/>
    </location>
</feature>
<feature type="transmembrane region" description="Helical" evidence="1">
    <location>
        <begin position="159"/>
        <end position="179"/>
    </location>
</feature>
<feature type="transmembrane region" description="Helical" evidence="1">
    <location>
        <begin position="189"/>
        <end position="209"/>
    </location>
</feature>
<feature type="transmembrane region" description="Helical" evidence="1">
    <location>
        <begin position="224"/>
        <end position="244"/>
    </location>
</feature>
<feature type="transmembrane region" description="Helical" evidence="1">
    <location>
        <begin position="292"/>
        <end position="312"/>
    </location>
</feature>
<feature type="transmembrane region" description="Helical" evidence="1">
    <location>
        <begin position="329"/>
        <end position="349"/>
    </location>
</feature>
<feature type="transmembrane region" description="Helical" evidence="1">
    <location>
        <begin position="356"/>
        <end position="376"/>
    </location>
</feature>
<feature type="transmembrane region" description="Helical" evidence="1">
    <location>
        <begin position="386"/>
        <end position="406"/>
    </location>
</feature>
<feature type="transmembrane region" description="Helical" evidence="1">
    <location>
        <begin position="418"/>
        <end position="438"/>
    </location>
</feature>
<feature type="transmembrane region" description="Helical" evidence="1">
    <location>
        <begin position="449"/>
        <end position="469"/>
    </location>
</feature>
<feature type="region of interest" description="Disordered" evidence="2">
    <location>
        <begin position="1"/>
        <end position="24"/>
    </location>
</feature>
<feature type="compositionally biased region" description="Basic and acidic residues" evidence="2">
    <location>
        <begin position="7"/>
        <end position="20"/>
    </location>
</feature>
<evidence type="ECO:0000255" key="1"/>
<evidence type="ECO:0000256" key="2">
    <source>
        <dbReference type="SAM" id="MobiDB-lite"/>
    </source>
</evidence>
<evidence type="ECO:0000303" key="3">
    <source>
    </source>
</evidence>
<evidence type="ECO:0000305" key="4"/>
<evidence type="ECO:0000305" key="5">
    <source>
    </source>
</evidence>